<reference key="1">
    <citation type="journal article" date="2004" name="Nat. Biotechnol.">
        <title>Complete sequence and comparative genome analysis of the dairy bacterium Streptococcus thermophilus.</title>
        <authorList>
            <person name="Bolotin A."/>
            <person name="Quinquis B."/>
            <person name="Renault P."/>
            <person name="Sorokin A."/>
            <person name="Ehrlich S.D."/>
            <person name="Kulakauskas S."/>
            <person name="Lapidus A."/>
            <person name="Goltsman E."/>
            <person name="Mazur M."/>
            <person name="Pusch G.D."/>
            <person name="Fonstein M."/>
            <person name="Overbeek R."/>
            <person name="Kyprides N."/>
            <person name="Purnelle B."/>
            <person name="Prozzi D."/>
            <person name="Ngui K."/>
            <person name="Masuy D."/>
            <person name="Hancy F."/>
            <person name="Burteau S."/>
            <person name="Boutry M."/>
            <person name="Delcour J."/>
            <person name="Goffeau A."/>
            <person name="Hols P."/>
        </authorList>
    </citation>
    <scope>NUCLEOTIDE SEQUENCE [LARGE SCALE GENOMIC DNA]</scope>
    <source>
        <strain>CNRZ 1066</strain>
    </source>
</reference>
<dbReference type="EMBL" id="CP000024">
    <property type="protein sequence ID" value="AAV62178.1"/>
    <property type="molecule type" value="Genomic_DNA"/>
</dbReference>
<dbReference type="SMR" id="Q5M0S3"/>
<dbReference type="KEGG" id="stc:str0582"/>
<dbReference type="HOGENOM" id="CLU_033732_3_0_9"/>
<dbReference type="GO" id="GO:0005829">
    <property type="term" value="C:cytosol"/>
    <property type="evidence" value="ECO:0007669"/>
    <property type="project" value="TreeGrafter"/>
</dbReference>
<dbReference type="GO" id="GO:0005525">
    <property type="term" value="F:GTP binding"/>
    <property type="evidence" value="ECO:0007669"/>
    <property type="project" value="UniProtKB-UniRule"/>
</dbReference>
<dbReference type="GO" id="GO:0046872">
    <property type="term" value="F:metal ion binding"/>
    <property type="evidence" value="ECO:0007669"/>
    <property type="project" value="UniProtKB-KW"/>
</dbReference>
<dbReference type="GO" id="GO:0000917">
    <property type="term" value="P:division septum assembly"/>
    <property type="evidence" value="ECO:0007669"/>
    <property type="project" value="UniProtKB-KW"/>
</dbReference>
<dbReference type="CDD" id="cd01876">
    <property type="entry name" value="YihA_EngB"/>
    <property type="match status" value="1"/>
</dbReference>
<dbReference type="FunFam" id="3.40.50.300:FF:000098">
    <property type="entry name" value="Probable GTP-binding protein EngB"/>
    <property type="match status" value="1"/>
</dbReference>
<dbReference type="Gene3D" id="3.40.50.300">
    <property type="entry name" value="P-loop containing nucleotide triphosphate hydrolases"/>
    <property type="match status" value="1"/>
</dbReference>
<dbReference type="HAMAP" id="MF_00321">
    <property type="entry name" value="GTPase_EngB"/>
    <property type="match status" value="1"/>
</dbReference>
<dbReference type="InterPro" id="IPR030393">
    <property type="entry name" value="G_ENGB_dom"/>
</dbReference>
<dbReference type="InterPro" id="IPR006073">
    <property type="entry name" value="GTP-bd"/>
</dbReference>
<dbReference type="InterPro" id="IPR019987">
    <property type="entry name" value="GTP-bd_ribosome_bio_YsxC"/>
</dbReference>
<dbReference type="InterPro" id="IPR027417">
    <property type="entry name" value="P-loop_NTPase"/>
</dbReference>
<dbReference type="InterPro" id="IPR005225">
    <property type="entry name" value="Small_GTP-bd"/>
</dbReference>
<dbReference type="NCBIfam" id="TIGR03598">
    <property type="entry name" value="GTPase_YsxC"/>
    <property type="match status" value="1"/>
</dbReference>
<dbReference type="NCBIfam" id="TIGR00231">
    <property type="entry name" value="small_GTP"/>
    <property type="match status" value="1"/>
</dbReference>
<dbReference type="PANTHER" id="PTHR11649:SF13">
    <property type="entry name" value="ENGB-TYPE G DOMAIN-CONTAINING PROTEIN"/>
    <property type="match status" value="1"/>
</dbReference>
<dbReference type="PANTHER" id="PTHR11649">
    <property type="entry name" value="MSS1/TRME-RELATED GTP-BINDING PROTEIN"/>
    <property type="match status" value="1"/>
</dbReference>
<dbReference type="Pfam" id="PF01926">
    <property type="entry name" value="MMR_HSR1"/>
    <property type="match status" value="1"/>
</dbReference>
<dbReference type="SUPFAM" id="SSF52540">
    <property type="entry name" value="P-loop containing nucleoside triphosphate hydrolases"/>
    <property type="match status" value="1"/>
</dbReference>
<dbReference type="PROSITE" id="PS51706">
    <property type="entry name" value="G_ENGB"/>
    <property type="match status" value="1"/>
</dbReference>
<keyword id="KW-0131">Cell cycle</keyword>
<keyword id="KW-0132">Cell division</keyword>
<keyword id="KW-0342">GTP-binding</keyword>
<keyword id="KW-0460">Magnesium</keyword>
<keyword id="KW-0479">Metal-binding</keyword>
<keyword id="KW-0547">Nucleotide-binding</keyword>
<keyword id="KW-0717">Septation</keyword>
<evidence type="ECO:0000255" key="1">
    <source>
        <dbReference type="HAMAP-Rule" id="MF_00321"/>
    </source>
</evidence>
<comment type="function">
    <text evidence="1">Necessary for normal cell division and for the maintenance of normal septation.</text>
</comment>
<comment type="cofactor">
    <cofactor evidence="1">
        <name>Mg(2+)</name>
        <dbReference type="ChEBI" id="CHEBI:18420"/>
    </cofactor>
</comment>
<comment type="similarity">
    <text evidence="1">Belongs to the TRAFAC class TrmE-Era-EngA-EngB-Septin-like GTPase superfamily. EngB GTPase family.</text>
</comment>
<sequence length="199" mass="22889">MTEEQVLNTHNAEILLSAANKSHYPQDDLPEVALAGRSNVGKSSFINTLLGRKNLARTSGKPGKTQLLNFYNIDDKLRFVDVPGYGYARVSKKERAKWGKMIEEYLVTRDNLRVVVSLVDLRHEPTQDDIQMYEFLKYYEIPVIVVATKADKIPRGKWNKHESIIKKKLNFDKNDHFIVFSSVTRDGYDEAWDTILAEL</sequence>
<name>ENGB_STRT1</name>
<proteinExistence type="inferred from homology"/>
<protein>
    <recommendedName>
        <fullName evidence="1">Probable GTP-binding protein EngB</fullName>
    </recommendedName>
</protein>
<feature type="chain" id="PRO_0000266970" description="Probable GTP-binding protein EngB">
    <location>
        <begin position="1"/>
        <end position="199"/>
    </location>
</feature>
<feature type="domain" description="EngB-type G" evidence="1">
    <location>
        <begin position="28"/>
        <end position="199"/>
    </location>
</feature>
<feature type="binding site" evidence="1">
    <location>
        <begin position="36"/>
        <end position="43"/>
    </location>
    <ligand>
        <name>GTP</name>
        <dbReference type="ChEBI" id="CHEBI:37565"/>
    </ligand>
</feature>
<feature type="binding site" evidence="1">
    <location>
        <position position="43"/>
    </location>
    <ligand>
        <name>Mg(2+)</name>
        <dbReference type="ChEBI" id="CHEBI:18420"/>
    </ligand>
</feature>
<feature type="binding site" evidence="1">
    <location>
        <begin position="63"/>
        <end position="67"/>
    </location>
    <ligand>
        <name>GTP</name>
        <dbReference type="ChEBI" id="CHEBI:37565"/>
    </ligand>
</feature>
<feature type="binding site" evidence="1">
    <location>
        <position position="65"/>
    </location>
    <ligand>
        <name>Mg(2+)</name>
        <dbReference type="ChEBI" id="CHEBI:18420"/>
    </ligand>
</feature>
<feature type="binding site" evidence="1">
    <location>
        <begin position="81"/>
        <end position="84"/>
    </location>
    <ligand>
        <name>GTP</name>
        <dbReference type="ChEBI" id="CHEBI:37565"/>
    </ligand>
</feature>
<feature type="binding site" evidence="1">
    <location>
        <begin position="148"/>
        <end position="151"/>
    </location>
    <ligand>
        <name>GTP</name>
        <dbReference type="ChEBI" id="CHEBI:37565"/>
    </ligand>
</feature>
<feature type="binding site" evidence="1">
    <location>
        <begin position="180"/>
        <end position="182"/>
    </location>
    <ligand>
        <name>GTP</name>
        <dbReference type="ChEBI" id="CHEBI:37565"/>
    </ligand>
</feature>
<accession>Q5M0S3</accession>
<organism>
    <name type="scientific">Streptococcus thermophilus (strain CNRZ 1066)</name>
    <dbReference type="NCBI Taxonomy" id="299768"/>
    <lineage>
        <taxon>Bacteria</taxon>
        <taxon>Bacillati</taxon>
        <taxon>Bacillota</taxon>
        <taxon>Bacilli</taxon>
        <taxon>Lactobacillales</taxon>
        <taxon>Streptococcaceae</taxon>
        <taxon>Streptococcus</taxon>
    </lineage>
</organism>
<gene>
    <name evidence="1" type="primary">engB</name>
    <name type="ordered locus">str0582</name>
</gene>